<reference key="1">
    <citation type="journal article" date="2005" name="DNA Res.">
        <title>Complete genome sequence of the facultative anaerobic magnetotactic bacterium Magnetospirillum sp. strain AMB-1.</title>
        <authorList>
            <person name="Matsunaga T."/>
            <person name="Okamura Y."/>
            <person name="Fukuda Y."/>
            <person name="Wahyudi A.T."/>
            <person name="Murase Y."/>
            <person name="Takeyama H."/>
        </authorList>
    </citation>
    <scope>NUCLEOTIDE SEQUENCE [LARGE SCALE GENOMIC DNA]</scope>
    <source>
        <strain>ATCC 700264 / AMB-1</strain>
    </source>
</reference>
<sequence>MSMTDPLGDLLTRIRNGQRANKSTVVSPASSLRANVLEVLKREGYIRGYARSELRPGVAQLSIELKYHEGQPVIREISRVSTPGRRVYSKIADLRRVANGLGITILSTPRGVMSDTEARTQNVGGEVLCEVF</sequence>
<accession>Q2W2K5</accession>
<protein>
    <recommendedName>
        <fullName evidence="1">Small ribosomal subunit protein uS8</fullName>
    </recommendedName>
    <alternativeName>
        <fullName evidence="2">30S ribosomal protein S8</fullName>
    </alternativeName>
</protein>
<comment type="function">
    <text evidence="1">One of the primary rRNA binding proteins, it binds directly to 16S rRNA central domain where it helps coordinate assembly of the platform of the 30S subunit.</text>
</comment>
<comment type="subunit">
    <text evidence="1">Part of the 30S ribosomal subunit. Contacts proteins S5 and S12.</text>
</comment>
<comment type="similarity">
    <text evidence="1">Belongs to the universal ribosomal protein uS8 family.</text>
</comment>
<dbReference type="EMBL" id="AP007255">
    <property type="protein sequence ID" value="BAE51920.1"/>
    <property type="molecule type" value="Genomic_DNA"/>
</dbReference>
<dbReference type="RefSeq" id="WP_011385490.1">
    <property type="nucleotide sequence ID" value="NC_007626.1"/>
</dbReference>
<dbReference type="SMR" id="Q2W2K5"/>
<dbReference type="STRING" id="342108.amb3116"/>
<dbReference type="KEGG" id="mag:amb3116"/>
<dbReference type="HOGENOM" id="CLU_098428_0_0_5"/>
<dbReference type="OrthoDB" id="9802617at2"/>
<dbReference type="Proteomes" id="UP000007058">
    <property type="component" value="Chromosome"/>
</dbReference>
<dbReference type="GO" id="GO:1990904">
    <property type="term" value="C:ribonucleoprotein complex"/>
    <property type="evidence" value="ECO:0007669"/>
    <property type="project" value="UniProtKB-KW"/>
</dbReference>
<dbReference type="GO" id="GO:0005840">
    <property type="term" value="C:ribosome"/>
    <property type="evidence" value="ECO:0007669"/>
    <property type="project" value="UniProtKB-KW"/>
</dbReference>
<dbReference type="GO" id="GO:0019843">
    <property type="term" value="F:rRNA binding"/>
    <property type="evidence" value="ECO:0007669"/>
    <property type="project" value="UniProtKB-UniRule"/>
</dbReference>
<dbReference type="GO" id="GO:0003735">
    <property type="term" value="F:structural constituent of ribosome"/>
    <property type="evidence" value="ECO:0007669"/>
    <property type="project" value="InterPro"/>
</dbReference>
<dbReference type="GO" id="GO:0006412">
    <property type="term" value="P:translation"/>
    <property type="evidence" value="ECO:0007669"/>
    <property type="project" value="UniProtKB-UniRule"/>
</dbReference>
<dbReference type="FunFam" id="3.30.1490.10:FF:000001">
    <property type="entry name" value="30S ribosomal protein S8"/>
    <property type="match status" value="1"/>
</dbReference>
<dbReference type="Gene3D" id="3.30.1370.30">
    <property type="match status" value="1"/>
</dbReference>
<dbReference type="Gene3D" id="3.30.1490.10">
    <property type="match status" value="1"/>
</dbReference>
<dbReference type="HAMAP" id="MF_01302_B">
    <property type="entry name" value="Ribosomal_uS8_B"/>
    <property type="match status" value="1"/>
</dbReference>
<dbReference type="InterPro" id="IPR000630">
    <property type="entry name" value="Ribosomal_uS8"/>
</dbReference>
<dbReference type="InterPro" id="IPR047863">
    <property type="entry name" value="Ribosomal_uS8_CS"/>
</dbReference>
<dbReference type="InterPro" id="IPR035987">
    <property type="entry name" value="Ribosomal_uS8_sf"/>
</dbReference>
<dbReference type="NCBIfam" id="NF001109">
    <property type="entry name" value="PRK00136.1"/>
    <property type="match status" value="1"/>
</dbReference>
<dbReference type="PANTHER" id="PTHR11758">
    <property type="entry name" value="40S RIBOSOMAL PROTEIN S15A"/>
    <property type="match status" value="1"/>
</dbReference>
<dbReference type="Pfam" id="PF00410">
    <property type="entry name" value="Ribosomal_S8"/>
    <property type="match status" value="1"/>
</dbReference>
<dbReference type="SUPFAM" id="SSF56047">
    <property type="entry name" value="Ribosomal protein S8"/>
    <property type="match status" value="1"/>
</dbReference>
<dbReference type="PROSITE" id="PS00053">
    <property type="entry name" value="RIBOSOMAL_S8"/>
    <property type="match status" value="1"/>
</dbReference>
<feature type="chain" id="PRO_0000290871" description="Small ribosomal subunit protein uS8">
    <location>
        <begin position="1"/>
        <end position="132"/>
    </location>
</feature>
<proteinExistence type="inferred from homology"/>
<gene>
    <name evidence="1" type="primary">rpsH</name>
    <name type="ordered locus">amb3116</name>
</gene>
<organism>
    <name type="scientific">Paramagnetospirillum magneticum (strain ATCC 700264 / AMB-1)</name>
    <name type="common">Magnetospirillum magneticum</name>
    <dbReference type="NCBI Taxonomy" id="342108"/>
    <lineage>
        <taxon>Bacteria</taxon>
        <taxon>Pseudomonadati</taxon>
        <taxon>Pseudomonadota</taxon>
        <taxon>Alphaproteobacteria</taxon>
        <taxon>Rhodospirillales</taxon>
        <taxon>Magnetospirillaceae</taxon>
        <taxon>Paramagnetospirillum</taxon>
    </lineage>
</organism>
<keyword id="KW-0687">Ribonucleoprotein</keyword>
<keyword id="KW-0689">Ribosomal protein</keyword>
<keyword id="KW-0694">RNA-binding</keyword>
<keyword id="KW-0699">rRNA-binding</keyword>
<evidence type="ECO:0000255" key="1">
    <source>
        <dbReference type="HAMAP-Rule" id="MF_01302"/>
    </source>
</evidence>
<evidence type="ECO:0000305" key="2"/>
<name>RS8_PARM1</name>